<protein>
    <recommendedName>
        <fullName evidence="1">Acetylglutamate kinase</fullName>
        <ecNumber evidence="1">2.7.2.8</ecNumber>
    </recommendedName>
    <alternativeName>
        <fullName evidence="1">N-acetyl-L-glutamate 5-phosphotransferase</fullName>
    </alternativeName>
    <alternativeName>
        <fullName evidence="1">NAG kinase</fullName>
        <shortName evidence="1">NAGK</shortName>
    </alternativeName>
</protein>
<accession>Q7NEE9</accession>
<organism>
    <name type="scientific">Gloeobacter violaceus (strain ATCC 29082 / PCC 7421)</name>
    <dbReference type="NCBI Taxonomy" id="251221"/>
    <lineage>
        <taxon>Bacteria</taxon>
        <taxon>Bacillati</taxon>
        <taxon>Cyanobacteriota</taxon>
        <taxon>Cyanophyceae</taxon>
        <taxon>Gloeobacterales</taxon>
        <taxon>Gloeobacteraceae</taxon>
        <taxon>Gloeobacter</taxon>
    </lineage>
</organism>
<name>ARGB_GLOVI</name>
<feature type="chain" id="PRO_0000112619" description="Acetylglutamate kinase">
    <location>
        <begin position="1"/>
        <end position="303"/>
    </location>
</feature>
<feature type="binding site" evidence="1">
    <location>
        <begin position="75"/>
        <end position="76"/>
    </location>
    <ligand>
        <name>substrate</name>
    </ligand>
</feature>
<feature type="binding site" evidence="1">
    <location>
        <position position="97"/>
    </location>
    <ligand>
        <name>substrate</name>
    </ligand>
</feature>
<feature type="binding site" evidence="1">
    <location>
        <position position="194"/>
    </location>
    <ligand>
        <name>substrate</name>
    </ligand>
</feature>
<feature type="site" description="Transition state stabilizer" evidence="1">
    <location>
        <position position="40"/>
    </location>
</feature>
<feature type="site" description="Transition state stabilizer" evidence="1">
    <location>
        <position position="257"/>
    </location>
</feature>
<reference key="1">
    <citation type="journal article" date="2003" name="DNA Res.">
        <title>Complete genome structure of Gloeobacter violaceus PCC 7421, a cyanobacterium that lacks thylakoids.</title>
        <authorList>
            <person name="Nakamura Y."/>
            <person name="Kaneko T."/>
            <person name="Sato S."/>
            <person name="Mimuro M."/>
            <person name="Miyashita H."/>
            <person name="Tsuchiya T."/>
            <person name="Sasamoto S."/>
            <person name="Watanabe A."/>
            <person name="Kawashima K."/>
            <person name="Kishida Y."/>
            <person name="Kiyokawa C."/>
            <person name="Kohara M."/>
            <person name="Matsumoto M."/>
            <person name="Matsuno A."/>
            <person name="Nakazaki N."/>
            <person name="Shimpo S."/>
            <person name="Takeuchi C."/>
            <person name="Yamada M."/>
            <person name="Tabata S."/>
        </authorList>
    </citation>
    <scope>NUCLEOTIDE SEQUENCE [LARGE SCALE GENOMIC DNA]</scope>
    <source>
        <strain>ATCC 29082 / PCC 7421</strain>
    </source>
</reference>
<dbReference type="EC" id="2.7.2.8" evidence="1"/>
<dbReference type="EMBL" id="BA000045">
    <property type="protein sequence ID" value="BAC91872.1"/>
    <property type="molecule type" value="Genomic_DNA"/>
</dbReference>
<dbReference type="RefSeq" id="NP_926877.1">
    <property type="nucleotide sequence ID" value="NC_005125.1"/>
</dbReference>
<dbReference type="RefSeq" id="WP_011143919.1">
    <property type="nucleotide sequence ID" value="NC_005125.1"/>
</dbReference>
<dbReference type="SMR" id="Q7NEE9"/>
<dbReference type="FunCoup" id="Q7NEE9">
    <property type="interactions" value="253"/>
</dbReference>
<dbReference type="STRING" id="251221.gene:10761448"/>
<dbReference type="EnsemblBacteria" id="BAC91872">
    <property type="protein sequence ID" value="BAC91872"/>
    <property type="gene ID" value="BAC91872"/>
</dbReference>
<dbReference type="KEGG" id="gvi:gll3931"/>
<dbReference type="PATRIC" id="fig|251221.4.peg.3964"/>
<dbReference type="eggNOG" id="COG0548">
    <property type="taxonomic scope" value="Bacteria"/>
</dbReference>
<dbReference type="HOGENOM" id="CLU_053680_0_1_3"/>
<dbReference type="InParanoid" id="Q7NEE9"/>
<dbReference type="OrthoDB" id="9803155at2"/>
<dbReference type="PhylomeDB" id="Q7NEE9"/>
<dbReference type="UniPathway" id="UPA00068">
    <property type="reaction ID" value="UER00107"/>
</dbReference>
<dbReference type="Proteomes" id="UP000000557">
    <property type="component" value="Chromosome"/>
</dbReference>
<dbReference type="GO" id="GO:0005737">
    <property type="term" value="C:cytoplasm"/>
    <property type="evidence" value="ECO:0007669"/>
    <property type="project" value="UniProtKB-SubCell"/>
</dbReference>
<dbReference type="GO" id="GO:0003991">
    <property type="term" value="F:acetylglutamate kinase activity"/>
    <property type="evidence" value="ECO:0000318"/>
    <property type="project" value="GO_Central"/>
</dbReference>
<dbReference type="GO" id="GO:0005524">
    <property type="term" value="F:ATP binding"/>
    <property type="evidence" value="ECO:0007669"/>
    <property type="project" value="UniProtKB-UniRule"/>
</dbReference>
<dbReference type="GO" id="GO:0042450">
    <property type="term" value="P:arginine biosynthetic process via ornithine"/>
    <property type="evidence" value="ECO:0007669"/>
    <property type="project" value="UniProtKB-UniRule"/>
</dbReference>
<dbReference type="GO" id="GO:0006526">
    <property type="term" value="P:L-arginine biosynthetic process"/>
    <property type="evidence" value="ECO:0000318"/>
    <property type="project" value="GO_Central"/>
</dbReference>
<dbReference type="CDD" id="cd04250">
    <property type="entry name" value="AAK_NAGK-C"/>
    <property type="match status" value="1"/>
</dbReference>
<dbReference type="FunFam" id="3.40.1160.10:FF:000004">
    <property type="entry name" value="Acetylglutamate kinase"/>
    <property type="match status" value="1"/>
</dbReference>
<dbReference type="Gene3D" id="3.40.1160.10">
    <property type="entry name" value="Acetylglutamate kinase-like"/>
    <property type="match status" value="1"/>
</dbReference>
<dbReference type="HAMAP" id="MF_00082">
    <property type="entry name" value="ArgB"/>
    <property type="match status" value="1"/>
</dbReference>
<dbReference type="InterPro" id="IPR036393">
    <property type="entry name" value="AceGlu_kinase-like_sf"/>
</dbReference>
<dbReference type="InterPro" id="IPR004662">
    <property type="entry name" value="AcgluKinase_fam"/>
</dbReference>
<dbReference type="InterPro" id="IPR037528">
    <property type="entry name" value="ArgB"/>
</dbReference>
<dbReference type="InterPro" id="IPR001048">
    <property type="entry name" value="Asp/Glu/Uridylate_kinase"/>
</dbReference>
<dbReference type="InterPro" id="IPR001057">
    <property type="entry name" value="Glu/AcGlu_kinase"/>
</dbReference>
<dbReference type="InterPro" id="IPR041727">
    <property type="entry name" value="NAGK-C"/>
</dbReference>
<dbReference type="NCBIfam" id="TIGR00761">
    <property type="entry name" value="argB"/>
    <property type="match status" value="1"/>
</dbReference>
<dbReference type="PANTHER" id="PTHR23342">
    <property type="entry name" value="N-ACETYLGLUTAMATE SYNTHASE"/>
    <property type="match status" value="1"/>
</dbReference>
<dbReference type="PANTHER" id="PTHR23342:SF0">
    <property type="entry name" value="N-ACETYLGLUTAMATE SYNTHASE, MITOCHONDRIAL"/>
    <property type="match status" value="1"/>
</dbReference>
<dbReference type="Pfam" id="PF00696">
    <property type="entry name" value="AA_kinase"/>
    <property type="match status" value="1"/>
</dbReference>
<dbReference type="PIRSF" id="PIRSF000728">
    <property type="entry name" value="NAGK"/>
    <property type="match status" value="1"/>
</dbReference>
<dbReference type="PRINTS" id="PR00474">
    <property type="entry name" value="GLU5KINASE"/>
</dbReference>
<dbReference type="SUPFAM" id="SSF53633">
    <property type="entry name" value="Carbamate kinase-like"/>
    <property type="match status" value="1"/>
</dbReference>
<gene>
    <name evidence="1" type="primary">argB</name>
    <name type="ordered locus">gll3931</name>
</gene>
<evidence type="ECO:0000255" key="1">
    <source>
        <dbReference type="HAMAP-Rule" id="MF_00082"/>
    </source>
</evidence>
<comment type="function">
    <text evidence="1">Catalyzes the ATP-dependent phosphorylation of N-acetyl-L-glutamate.</text>
</comment>
<comment type="catalytic activity">
    <reaction evidence="1">
        <text>N-acetyl-L-glutamate + ATP = N-acetyl-L-glutamyl 5-phosphate + ADP</text>
        <dbReference type="Rhea" id="RHEA:14629"/>
        <dbReference type="ChEBI" id="CHEBI:30616"/>
        <dbReference type="ChEBI" id="CHEBI:44337"/>
        <dbReference type="ChEBI" id="CHEBI:57936"/>
        <dbReference type="ChEBI" id="CHEBI:456216"/>
        <dbReference type="EC" id="2.7.2.8"/>
    </reaction>
</comment>
<comment type="pathway">
    <text evidence="1">Amino-acid biosynthesis; L-arginine biosynthesis; N(2)-acetyl-L-ornithine from L-glutamate: step 2/4.</text>
</comment>
<comment type="subcellular location">
    <subcellularLocation>
        <location evidence="1">Cytoplasm</location>
    </subcellularLocation>
</comment>
<comment type="similarity">
    <text evidence="1">Belongs to the acetylglutamate kinase family. ArgB subfamily.</text>
</comment>
<proteinExistence type="inferred from homology"/>
<sequence length="303" mass="32258">MSQDAPSCFTAIISPADRVQVLAEALPYIQRFAGKTIVVKYGGAAMVKENLRDLVIRDIVFLATVGIKPVVVHGGGPEINSWLERLNIPVQFVGGLRVTDKITMEVVEMVLAGKVNKSIVQMINQAGGSAVGLCGRDGSIIEARPHQSAQLQPDIGFVGDIQSVNPKLIQSLLKEGHIPVLSSVASDENGQAYNINADTAAGELAAALDAEKLILLTDTPGILLDKDHPRSLIRKLDIYQARKLIAEGVVDGGMIPKVQCCVRALAQGVRAAHIVDGRQMHALLLEVLTDQGIGSMLVASELV</sequence>
<keyword id="KW-0028">Amino-acid biosynthesis</keyword>
<keyword id="KW-0055">Arginine biosynthesis</keyword>
<keyword id="KW-0067">ATP-binding</keyword>
<keyword id="KW-0963">Cytoplasm</keyword>
<keyword id="KW-0418">Kinase</keyword>
<keyword id="KW-0547">Nucleotide-binding</keyword>
<keyword id="KW-1185">Reference proteome</keyword>
<keyword id="KW-0808">Transferase</keyword>